<gene>
    <name evidence="1" type="primary">nuoI</name>
    <name type="ordered locus">BCAN_A0825</name>
</gene>
<evidence type="ECO:0000255" key="1">
    <source>
        <dbReference type="HAMAP-Rule" id="MF_01351"/>
    </source>
</evidence>
<organism>
    <name type="scientific">Brucella canis (strain ATCC 23365 / NCTC 10854 / RM-666)</name>
    <dbReference type="NCBI Taxonomy" id="483179"/>
    <lineage>
        <taxon>Bacteria</taxon>
        <taxon>Pseudomonadati</taxon>
        <taxon>Pseudomonadota</taxon>
        <taxon>Alphaproteobacteria</taxon>
        <taxon>Hyphomicrobiales</taxon>
        <taxon>Brucellaceae</taxon>
        <taxon>Brucella/Ochrobactrum group</taxon>
        <taxon>Brucella</taxon>
    </lineage>
</organism>
<accession>A9MAI7</accession>
<comment type="function">
    <text evidence="1">NDH-1 shuttles electrons from NADH, via FMN and iron-sulfur (Fe-S) centers, to quinones in the respiratory chain. The immediate electron acceptor for the enzyme in this species is believed to be ubiquinone. Couples the redox reaction to proton translocation (for every two electrons transferred, four hydrogen ions are translocated across the cytoplasmic membrane), and thus conserves the redox energy in a proton gradient.</text>
</comment>
<comment type="catalytic activity">
    <reaction evidence="1">
        <text>a quinone + NADH + 5 H(+)(in) = a quinol + NAD(+) + 4 H(+)(out)</text>
        <dbReference type="Rhea" id="RHEA:57888"/>
        <dbReference type="ChEBI" id="CHEBI:15378"/>
        <dbReference type="ChEBI" id="CHEBI:24646"/>
        <dbReference type="ChEBI" id="CHEBI:57540"/>
        <dbReference type="ChEBI" id="CHEBI:57945"/>
        <dbReference type="ChEBI" id="CHEBI:132124"/>
    </reaction>
</comment>
<comment type="cofactor">
    <cofactor evidence="1">
        <name>[4Fe-4S] cluster</name>
        <dbReference type="ChEBI" id="CHEBI:49883"/>
    </cofactor>
    <text evidence="1">Binds 2 [4Fe-4S] clusters per subunit.</text>
</comment>
<comment type="subunit">
    <text evidence="1">NDH-1 is composed of 14 different subunits. Subunits NuoA, H, J, K, L, M, N constitute the membrane sector of the complex.</text>
</comment>
<comment type="subcellular location">
    <subcellularLocation>
        <location evidence="1">Cell inner membrane</location>
        <topology evidence="1">Peripheral membrane protein</topology>
    </subcellularLocation>
</comment>
<comment type="similarity">
    <text evidence="1">Belongs to the complex I 23 kDa subunit family.</text>
</comment>
<feature type="chain" id="PRO_1000086951" description="NADH-quinone oxidoreductase subunit I">
    <location>
        <begin position="1"/>
        <end position="163"/>
    </location>
</feature>
<feature type="domain" description="4Fe-4S ferredoxin-type 1" evidence="1">
    <location>
        <begin position="53"/>
        <end position="83"/>
    </location>
</feature>
<feature type="domain" description="4Fe-4S ferredoxin-type 2" evidence="1">
    <location>
        <begin position="94"/>
        <end position="123"/>
    </location>
</feature>
<feature type="binding site" evidence="1">
    <location>
        <position position="63"/>
    </location>
    <ligand>
        <name>[4Fe-4S] cluster</name>
        <dbReference type="ChEBI" id="CHEBI:49883"/>
        <label>1</label>
    </ligand>
</feature>
<feature type="binding site" evidence="1">
    <location>
        <position position="66"/>
    </location>
    <ligand>
        <name>[4Fe-4S] cluster</name>
        <dbReference type="ChEBI" id="CHEBI:49883"/>
        <label>1</label>
    </ligand>
</feature>
<feature type="binding site" evidence="1">
    <location>
        <position position="69"/>
    </location>
    <ligand>
        <name>[4Fe-4S] cluster</name>
        <dbReference type="ChEBI" id="CHEBI:49883"/>
        <label>1</label>
    </ligand>
</feature>
<feature type="binding site" evidence="1">
    <location>
        <position position="73"/>
    </location>
    <ligand>
        <name>[4Fe-4S] cluster</name>
        <dbReference type="ChEBI" id="CHEBI:49883"/>
        <label>2</label>
    </ligand>
</feature>
<feature type="binding site" evidence="1">
    <location>
        <position position="103"/>
    </location>
    <ligand>
        <name>[4Fe-4S] cluster</name>
        <dbReference type="ChEBI" id="CHEBI:49883"/>
        <label>2</label>
    </ligand>
</feature>
<feature type="binding site" evidence="1">
    <location>
        <position position="106"/>
    </location>
    <ligand>
        <name>[4Fe-4S] cluster</name>
        <dbReference type="ChEBI" id="CHEBI:49883"/>
        <label>2</label>
    </ligand>
</feature>
<feature type="binding site" evidence="1">
    <location>
        <position position="109"/>
    </location>
    <ligand>
        <name>[4Fe-4S] cluster</name>
        <dbReference type="ChEBI" id="CHEBI:49883"/>
        <label>2</label>
    </ligand>
</feature>
<feature type="binding site" evidence="1">
    <location>
        <position position="113"/>
    </location>
    <ligand>
        <name>[4Fe-4S] cluster</name>
        <dbReference type="ChEBI" id="CHEBI:49883"/>
        <label>1</label>
    </ligand>
</feature>
<reference key="1">
    <citation type="submission" date="2007-10" db="EMBL/GenBank/DDBJ databases">
        <title>Brucella canis ATCC 23365 whole genome shotgun sequencing project.</title>
        <authorList>
            <person name="Setubal J.C."/>
            <person name="Bowns C."/>
            <person name="Boyle S."/>
            <person name="Crasta O.R."/>
            <person name="Czar M.J."/>
            <person name="Dharmanolla C."/>
            <person name="Gillespie J.J."/>
            <person name="Kenyon R.W."/>
            <person name="Lu J."/>
            <person name="Mane S."/>
            <person name="Mohapatra S."/>
            <person name="Nagrani S."/>
            <person name="Purkayastha A."/>
            <person name="Rajasimha H.K."/>
            <person name="Shallom J.M."/>
            <person name="Shallom S."/>
            <person name="Shukla M."/>
            <person name="Snyder E.E."/>
            <person name="Sobral B.W."/>
            <person name="Wattam A.R."/>
            <person name="Will R."/>
            <person name="Williams K."/>
            <person name="Yoo H."/>
            <person name="Bruce D."/>
            <person name="Detter C."/>
            <person name="Munk C."/>
            <person name="Brettin T.S."/>
        </authorList>
    </citation>
    <scope>NUCLEOTIDE SEQUENCE [LARGE SCALE GENOMIC DNA]</scope>
    <source>
        <strain>ATCC 23365 / NCTC 10854 / RM-666</strain>
    </source>
</reference>
<dbReference type="EC" id="7.1.1.-" evidence="1"/>
<dbReference type="EMBL" id="CP000872">
    <property type="protein sequence ID" value="ABX61890.1"/>
    <property type="molecule type" value="Genomic_DNA"/>
</dbReference>
<dbReference type="RefSeq" id="WP_004690757.1">
    <property type="nucleotide sequence ID" value="NC_010103.1"/>
</dbReference>
<dbReference type="SMR" id="A9MAI7"/>
<dbReference type="GeneID" id="55590522"/>
<dbReference type="KEGG" id="bcs:BCAN_A0825"/>
<dbReference type="HOGENOM" id="CLU_067218_5_1_5"/>
<dbReference type="PhylomeDB" id="A9MAI7"/>
<dbReference type="Proteomes" id="UP000001385">
    <property type="component" value="Chromosome I"/>
</dbReference>
<dbReference type="GO" id="GO:0005886">
    <property type="term" value="C:plasma membrane"/>
    <property type="evidence" value="ECO:0007669"/>
    <property type="project" value="UniProtKB-SubCell"/>
</dbReference>
<dbReference type="GO" id="GO:0051539">
    <property type="term" value="F:4 iron, 4 sulfur cluster binding"/>
    <property type="evidence" value="ECO:0007669"/>
    <property type="project" value="UniProtKB-KW"/>
</dbReference>
<dbReference type="GO" id="GO:0005506">
    <property type="term" value="F:iron ion binding"/>
    <property type="evidence" value="ECO:0007669"/>
    <property type="project" value="UniProtKB-UniRule"/>
</dbReference>
<dbReference type="GO" id="GO:0050136">
    <property type="term" value="F:NADH:ubiquinone reductase (non-electrogenic) activity"/>
    <property type="evidence" value="ECO:0007669"/>
    <property type="project" value="UniProtKB-UniRule"/>
</dbReference>
<dbReference type="GO" id="GO:0048038">
    <property type="term" value="F:quinone binding"/>
    <property type="evidence" value="ECO:0007669"/>
    <property type="project" value="UniProtKB-KW"/>
</dbReference>
<dbReference type="GO" id="GO:0009060">
    <property type="term" value="P:aerobic respiration"/>
    <property type="evidence" value="ECO:0007669"/>
    <property type="project" value="TreeGrafter"/>
</dbReference>
<dbReference type="FunFam" id="3.30.70.3270:FF:000001">
    <property type="entry name" value="NADH-quinone oxidoreductase subunit I 1"/>
    <property type="match status" value="1"/>
</dbReference>
<dbReference type="Gene3D" id="3.30.70.3270">
    <property type="match status" value="1"/>
</dbReference>
<dbReference type="HAMAP" id="MF_01351">
    <property type="entry name" value="NDH1_NuoI"/>
    <property type="match status" value="1"/>
</dbReference>
<dbReference type="InterPro" id="IPR017896">
    <property type="entry name" value="4Fe4S_Fe-S-bd"/>
</dbReference>
<dbReference type="InterPro" id="IPR017900">
    <property type="entry name" value="4Fe4S_Fe_S_CS"/>
</dbReference>
<dbReference type="InterPro" id="IPR010226">
    <property type="entry name" value="NADH_quinone_OxRdtase_chainI"/>
</dbReference>
<dbReference type="NCBIfam" id="TIGR01971">
    <property type="entry name" value="NuoI"/>
    <property type="match status" value="1"/>
</dbReference>
<dbReference type="NCBIfam" id="NF004538">
    <property type="entry name" value="PRK05888.1-4"/>
    <property type="match status" value="1"/>
</dbReference>
<dbReference type="NCBIfam" id="NF004539">
    <property type="entry name" value="PRK05888.1-5"/>
    <property type="match status" value="1"/>
</dbReference>
<dbReference type="PANTHER" id="PTHR10849:SF20">
    <property type="entry name" value="NADH DEHYDROGENASE [UBIQUINONE] IRON-SULFUR PROTEIN 8, MITOCHONDRIAL"/>
    <property type="match status" value="1"/>
</dbReference>
<dbReference type="PANTHER" id="PTHR10849">
    <property type="entry name" value="NADH DEHYDROGENASE UBIQUINONE IRON-SULFUR PROTEIN 8, MITOCHONDRIAL"/>
    <property type="match status" value="1"/>
</dbReference>
<dbReference type="Pfam" id="PF12838">
    <property type="entry name" value="Fer4_7"/>
    <property type="match status" value="1"/>
</dbReference>
<dbReference type="SUPFAM" id="SSF54862">
    <property type="entry name" value="4Fe-4S ferredoxins"/>
    <property type="match status" value="1"/>
</dbReference>
<dbReference type="PROSITE" id="PS00198">
    <property type="entry name" value="4FE4S_FER_1"/>
    <property type="match status" value="2"/>
</dbReference>
<dbReference type="PROSITE" id="PS51379">
    <property type="entry name" value="4FE4S_FER_2"/>
    <property type="match status" value="2"/>
</dbReference>
<sequence length="163" mass="18549">MASITQAAKSLLLKEFASAFALSMRQFFAPKATLNYPHEKGPVSPRFRGEHALRRYPNGEERCIACKLCEAICPAQAITIEAGPRRNDGTRRTVRYDIDMVKCIYCGFCQEACPVDAIVEGPNFEFATETREELYYDKDKLLANGDRWEREIARNIAMDAPYR</sequence>
<name>NUOI_BRUC2</name>
<protein>
    <recommendedName>
        <fullName evidence="1">NADH-quinone oxidoreductase subunit I</fullName>
        <ecNumber evidence="1">7.1.1.-</ecNumber>
    </recommendedName>
    <alternativeName>
        <fullName evidence="1">NADH dehydrogenase I subunit I</fullName>
    </alternativeName>
    <alternativeName>
        <fullName evidence="1">NDH-1 subunit I</fullName>
    </alternativeName>
</protein>
<keyword id="KW-0004">4Fe-4S</keyword>
<keyword id="KW-0997">Cell inner membrane</keyword>
<keyword id="KW-1003">Cell membrane</keyword>
<keyword id="KW-0408">Iron</keyword>
<keyword id="KW-0411">Iron-sulfur</keyword>
<keyword id="KW-0472">Membrane</keyword>
<keyword id="KW-0479">Metal-binding</keyword>
<keyword id="KW-0520">NAD</keyword>
<keyword id="KW-0874">Quinone</keyword>
<keyword id="KW-1185">Reference proteome</keyword>
<keyword id="KW-0677">Repeat</keyword>
<keyword id="KW-1278">Translocase</keyword>
<keyword id="KW-0830">Ubiquinone</keyword>
<proteinExistence type="inferred from homology"/>